<evidence type="ECO:0000255" key="1">
    <source>
        <dbReference type="PROSITE-ProRule" id="PRU00285"/>
    </source>
</evidence>
<evidence type="ECO:0000256" key="2">
    <source>
        <dbReference type="SAM" id="MobiDB-lite"/>
    </source>
</evidence>
<evidence type="ECO:0000303" key="3">
    <source>
    </source>
</evidence>
<comment type="function">
    <text>Vital role in embryonic development.</text>
</comment>
<comment type="alternative products">
    <event type="alternative splicing"/>
    <isoform>
        <id>P82147-1</id>
        <name>Long</name>
        <sequence type="displayed"/>
    </isoform>
    <isoform>
        <id>P82147-2</id>
        <name>Short</name>
        <sequence type="described" ref="VSP_002420 VSP_002421"/>
    </isoform>
</comment>
<comment type="tissue specificity">
    <text>Ubiquitously expressed during embryogenesis with no sign of tissue specificity in expression up to stage 16.</text>
</comment>
<comment type="developmental stage">
    <text>Expressed throughout development. Highest expression during larval development.</text>
</comment>
<comment type="similarity">
    <text evidence="1">Belongs to the small heat shock protein (HSP20) family.</text>
</comment>
<accession>P82147</accession>
<accession>Q8MLQ9</accession>
<feature type="chain" id="PRO_0000125969" description="Protein lethal(2)essential for life">
    <location>
        <begin position="1"/>
        <end position="187"/>
    </location>
</feature>
<feature type="domain" description="sHSP" evidence="1">
    <location>
        <begin position="61"/>
        <end position="170"/>
    </location>
</feature>
<feature type="region of interest" description="Disordered" evidence="2">
    <location>
        <begin position="151"/>
        <end position="187"/>
    </location>
</feature>
<feature type="compositionally biased region" description="Basic and acidic residues" evidence="2">
    <location>
        <begin position="174"/>
        <end position="187"/>
    </location>
</feature>
<feature type="splice variant" id="VSP_002420" description="In isoform Short." evidence="3">
    <original>DVNPDTVTSSLSSDG</original>
    <variation>ESEFHQQNRKYAKRV</variation>
    <location>
        <begin position="131"/>
        <end position="145"/>
    </location>
</feature>
<feature type="splice variant" id="VSP_002421" description="In isoform Short." evidence="3">
    <location>
        <begin position="146"/>
        <end position="187"/>
    </location>
</feature>
<proteinExistence type="evidence at protein level"/>
<protein>
    <recommendedName>
        <fullName>Protein lethal(2)essential for life</fullName>
    </recommendedName>
    <alternativeName>
        <fullName>Protein Efl21</fullName>
    </alternativeName>
</protein>
<name>L2EFL_DROME</name>
<dbReference type="EMBL" id="AJ250883">
    <property type="protein sequence ID" value="CAB60198.1"/>
    <property type="molecule type" value="Genomic_DNA"/>
</dbReference>
<dbReference type="EMBL" id="X77635">
    <property type="protein sequence ID" value="CAB55438.1"/>
    <property type="molecule type" value="Genomic_DNA"/>
</dbReference>
<dbReference type="EMBL" id="AE013599">
    <property type="protein sequence ID" value="AAF47041.1"/>
    <property type="molecule type" value="Genomic_DNA"/>
</dbReference>
<dbReference type="EMBL" id="AE013599">
    <property type="protein sequence ID" value="AAM68267.1"/>
    <property type="molecule type" value="Genomic_DNA"/>
</dbReference>
<dbReference type="EMBL" id="AY047516">
    <property type="protein sequence ID" value="AAK77248.1"/>
    <property type="molecule type" value="mRNA"/>
</dbReference>
<dbReference type="EMBL" id="BT001462">
    <property type="protein sequence ID" value="AAN71217.1"/>
    <property type="status" value="ALT_SEQ"/>
    <property type="molecule type" value="mRNA"/>
</dbReference>
<dbReference type="PIR" id="S42032">
    <property type="entry name" value="S42032"/>
</dbReference>
<dbReference type="RefSeq" id="NP_001261156.1">
    <molecule id="P82147-1"/>
    <property type="nucleotide sequence ID" value="NM_001274227.1"/>
</dbReference>
<dbReference type="RefSeq" id="NP_523827.1">
    <molecule id="P82147-1"/>
    <property type="nucleotide sequence ID" value="NM_079103.3"/>
</dbReference>
<dbReference type="SMR" id="P82147"/>
<dbReference type="BioGRID" id="63343">
    <property type="interactions" value="15"/>
</dbReference>
<dbReference type="DIP" id="DIP-18793N"/>
<dbReference type="FunCoup" id="P82147">
    <property type="interactions" value="145"/>
</dbReference>
<dbReference type="IntAct" id="P82147">
    <property type="interactions" value="4"/>
</dbReference>
<dbReference type="STRING" id="7227.FBpp0307666"/>
<dbReference type="PaxDb" id="7227-FBpp0072009"/>
<dbReference type="DNASU" id="37744"/>
<dbReference type="EnsemblMetazoa" id="FBtr0072100">
    <molecule id="P82147-1"/>
    <property type="protein sequence ID" value="FBpp0072009"/>
    <property type="gene ID" value="FBgn0011296"/>
</dbReference>
<dbReference type="EnsemblMetazoa" id="FBtr0336685">
    <molecule id="P82147-1"/>
    <property type="protein sequence ID" value="FBpp0307666"/>
    <property type="gene ID" value="FBgn0011296"/>
</dbReference>
<dbReference type="GeneID" id="37744"/>
<dbReference type="KEGG" id="dme:Dmel_CG4533"/>
<dbReference type="AGR" id="FB:FBgn0011296"/>
<dbReference type="FlyBase" id="FBgn0011296">
    <property type="gene designation" value="l(2)efl"/>
</dbReference>
<dbReference type="VEuPathDB" id="VectorBase:FBgn0011296"/>
<dbReference type="eggNOG" id="KOG3591">
    <property type="taxonomic scope" value="Eukaryota"/>
</dbReference>
<dbReference type="GeneTree" id="ENSGT00940000166889"/>
<dbReference type="HOGENOM" id="CLU_095001_1_0_1"/>
<dbReference type="InParanoid" id="P82147"/>
<dbReference type="OMA" id="FRDWWED"/>
<dbReference type="OrthoDB" id="1431247at2759"/>
<dbReference type="PhylomeDB" id="P82147"/>
<dbReference type="Reactome" id="R-DME-3371571">
    <property type="pathway name" value="HSF1-dependent transactivation"/>
</dbReference>
<dbReference type="Reactome" id="R-DME-4420097">
    <property type="pathway name" value="VEGFA-VEGFR2 Pathway"/>
</dbReference>
<dbReference type="Reactome" id="R-DME-9009391">
    <property type="pathway name" value="Extra-nuclear estrogen signaling"/>
</dbReference>
<dbReference type="BioGRID-ORCS" id="37744">
    <property type="hits" value="0 hits in 3 CRISPR screens"/>
</dbReference>
<dbReference type="GenomeRNAi" id="37744"/>
<dbReference type="PRO" id="PR:P82147"/>
<dbReference type="Proteomes" id="UP000000803">
    <property type="component" value="Chromosome 2R"/>
</dbReference>
<dbReference type="Bgee" id="FBgn0011296">
    <property type="expression patterns" value="Expressed in crop (Drosophila) and 86 other cell types or tissues"/>
</dbReference>
<dbReference type="ExpressionAtlas" id="P82147">
    <property type="expression patterns" value="baseline and differential"/>
</dbReference>
<dbReference type="GO" id="GO:0005737">
    <property type="term" value="C:cytoplasm"/>
    <property type="evidence" value="ECO:0000318"/>
    <property type="project" value="GO_Central"/>
</dbReference>
<dbReference type="GO" id="GO:0005634">
    <property type="term" value="C:nucleus"/>
    <property type="evidence" value="ECO:0000318"/>
    <property type="project" value="GO_Central"/>
</dbReference>
<dbReference type="GO" id="GO:0048471">
    <property type="term" value="C:perinuclear region of cytoplasm"/>
    <property type="evidence" value="ECO:0000314"/>
    <property type="project" value="FlyBase"/>
</dbReference>
<dbReference type="GO" id="GO:0030018">
    <property type="term" value="C:Z disc"/>
    <property type="evidence" value="ECO:0000314"/>
    <property type="project" value="FlyBase"/>
</dbReference>
<dbReference type="GO" id="GO:0051082">
    <property type="term" value="F:unfolded protein binding"/>
    <property type="evidence" value="ECO:0000255"/>
    <property type="project" value="FlyBase"/>
</dbReference>
<dbReference type="GO" id="GO:0061077">
    <property type="term" value="P:chaperone-mediated protein folding"/>
    <property type="evidence" value="ECO:0000255"/>
    <property type="project" value="FlyBase"/>
</dbReference>
<dbReference type="GO" id="GO:0042026">
    <property type="term" value="P:protein refolding"/>
    <property type="evidence" value="ECO:0000314"/>
    <property type="project" value="FlyBase"/>
</dbReference>
<dbReference type="GO" id="GO:0006446">
    <property type="term" value="P:regulation of translational initiation"/>
    <property type="evidence" value="ECO:0000315"/>
    <property type="project" value="FlyBase"/>
</dbReference>
<dbReference type="GO" id="GO:0009408">
    <property type="term" value="P:response to heat"/>
    <property type="evidence" value="ECO:0000314"/>
    <property type="project" value="FlyBase"/>
</dbReference>
<dbReference type="GO" id="GO:0045214">
    <property type="term" value="P:sarcomere organization"/>
    <property type="evidence" value="ECO:0000315"/>
    <property type="project" value="FlyBase"/>
</dbReference>
<dbReference type="CDD" id="cd06526">
    <property type="entry name" value="metazoan_ACD"/>
    <property type="match status" value="1"/>
</dbReference>
<dbReference type="FunFam" id="2.60.40.790:FF:000069">
    <property type="entry name" value="Protein lethal(2)essential for life"/>
    <property type="match status" value="1"/>
</dbReference>
<dbReference type="Gene3D" id="2.60.40.790">
    <property type="match status" value="1"/>
</dbReference>
<dbReference type="InterPro" id="IPR002068">
    <property type="entry name" value="A-crystallin/Hsp20_dom"/>
</dbReference>
<dbReference type="InterPro" id="IPR055269">
    <property type="entry name" value="Alpha-crystallin/HSP_16"/>
</dbReference>
<dbReference type="InterPro" id="IPR001436">
    <property type="entry name" value="Alpha-crystallin/sHSP_animal"/>
</dbReference>
<dbReference type="InterPro" id="IPR008978">
    <property type="entry name" value="HSP20-like_chaperone"/>
</dbReference>
<dbReference type="PANTHER" id="PTHR45640">
    <property type="entry name" value="HEAT SHOCK PROTEIN HSP-12.2-RELATED"/>
    <property type="match status" value="1"/>
</dbReference>
<dbReference type="PANTHER" id="PTHR45640:SF34">
    <property type="entry name" value="PROTEIN LETHAL(2)ESSENTIAL FOR LIFE"/>
    <property type="match status" value="1"/>
</dbReference>
<dbReference type="Pfam" id="PF00011">
    <property type="entry name" value="HSP20"/>
    <property type="match status" value="1"/>
</dbReference>
<dbReference type="PIRSF" id="PIRSF036514">
    <property type="entry name" value="Sm_HSP_B1"/>
    <property type="match status" value="1"/>
</dbReference>
<dbReference type="PRINTS" id="PR00299">
    <property type="entry name" value="ACRYSTALLIN"/>
</dbReference>
<dbReference type="SUPFAM" id="SSF49764">
    <property type="entry name" value="HSP20-like chaperones"/>
    <property type="match status" value="1"/>
</dbReference>
<dbReference type="PROSITE" id="PS01031">
    <property type="entry name" value="SHSP"/>
    <property type="match status" value="1"/>
</dbReference>
<reference key="1">
    <citation type="submission" date="1999-11" db="EMBL/GenBank/DDBJ databases">
        <title>Tissue specificity and subcellular localisation of the Efl21 protein encoded by the heat shock related gene l(2)efl.</title>
        <authorList>
            <person name="Czaja J."/>
            <person name="Kurzik-Dumke U."/>
        </authorList>
    </citation>
    <scope>NUCLEOTIDE SEQUENCE [GENOMIC DNA] (ISOFORM LONG)</scope>
    <source>
        <strain>Oregon-R</strain>
    </source>
</reference>
<reference key="2">
    <citation type="journal article" date="1995" name="Gene">
        <title>Sequence of the new Drosophila melanogaster small heat-shock-related gene, lethal(2) essential for life [l(2)efl], at locus 59F4,5.</title>
        <authorList>
            <person name="Kurzik-Dumke U."/>
            <person name="Lohmann E."/>
        </authorList>
    </citation>
    <scope>NUCLEOTIDE SEQUENCE [GENOMIC DNA] (ISOFORM LONG)</scope>
    <scope>CHARACTERIZATION</scope>
    <source>
        <strain>Oregon-R</strain>
        <tissue>Embryo</tissue>
    </source>
</reference>
<reference key="3">
    <citation type="journal article" date="2000" name="Science">
        <title>The genome sequence of Drosophila melanogaster.</title>
        <authorList>
            <person name="Adams M.D."/>
            <person name="Celniker S.E."/>
            <person name="Holt R.A."/>
            <person name="Evans C.A."/>
            <person name="Gocayne J.D."/>
            <person name="Amanatides P.G."/>
            <person name="Scherer S.E."/>
            <person name="Li P.W."/>
            <person name="Hoskins R.A."/>
            <person name="Galle R.F."/>
            <person name="George R.A."/>
            <person name="Lewis S.E."/>
            <person name="Richards S."/>
            <person name="Ashburner M."/>
            <person name="Henderson S.N."/>
            <person name="Sutton G.G."/>
            <person name="Wortman J.R."/>
            <person name="Yandell M.D."/>
            <person name="Zhang Q."/>
            <person name="Chen L.X."/>
            <person name="Brandon R.C."/>
            <person name="Rogers Y.-H.C."/>
            <person name="Blazej R.G."/>
            <person name="Champe M."/>
            <person name="Pfeiffer B.D."/>
            <person name="Wan K.H."/>
            <person name="Doyle C."/>
            <person name="Baxter E.G."/>
            <person name="Helt G."/>
            <person name="Nelson C.R."/>
            <person name="Miklos G.L.G."/>
            <person name="Abril J.F."/>
            <person name="Agbayani A."/>
            <person name="An H.-J."/>
            <person name="Andrews-Pfannkoch C."/>
            <person name="Baldwin D."/>
            <person name="Ballew R.M."/>
            <person name="Basu A."/>
            <person name="Baxendale J."/>
            <person name="Bayraktaroglu L."/>
            <person name="Beasley E.M."/>
            <person name="Beeson K.Y."/>
            <person name="Benos P.V."/>
            <person name="Berman B.P."/>
            <person name="Bhandari D."/>
            <person name="Bolshakov S."/>
            <person name="Borkova D."/>
            <person name="Botchan M.R."/>
            <person name="Bouck J."/>
            <person name="Brokstein P."/>
            <person name="Brottier P."/>
            <person name="Burtis K.C."/>
            <person name="Busam D.A."/>
            <person name="Butler H."/>
            <person name="Cadieu E."/>
            <person name="Center A."/>
            <person name="Chandra I."/>
            <person name="Cherry J.M."/>
            <person name="Cawley S."/>
            <person name="Dahlke C."/>
            <person name="Davenport L.B."/>
            <person name="Davies P."/>
            <person name="de Pablos B."/>
            <person name="Delcher A."/>
            <person name="Deng Z."/>
            <person name="Mays A.D."/>
            <person name="Dew I."/>
            <person name="Dietz S.M."/>
            <person name="Dodson K."/>
            <person name="Doup L.E."/>
            <person name="Downes M."/>
            <person name="Dugan-Rocha S."/>
            <person name="Dunkov B.C."/>
            <person name="Dunn P."/>
            <person name="Durbin K.J."/>
            <person name="Evangelista C.C."/>
            <person name="Ferraz C."/>
            <person name="Ferriera S."/>
            <person name="Fleischmann W."/>
            <person name="Fosler C."/>
            <person name="Gabrielian A.E."/>
            <person name="Garg N.S."/>
            <person name="Gelbart W.M."/>
            <person name="Glasser K."/>
            <person name="Glodek A."/>
            <person name="Gong F."/>
            <person name="Gorrell J.H."/>
            <person name="Gu Z."/>
            <person name="Guan P."/>
            <person name="Harris M."/>
            <person name="Harris N.L."/>
            <person name="Harvey D.A."/>
            <person name="Heiman T.J."/>
            <person name="Hernandez J.R."/>
            <person name="Houck J."/>
            <person name="Hostin D."/>
            <person name="Houston K.A."/>
            <person name="Howland T.J."/>
            <person name="Wei M.-H."/>
            <person name="Ibegwam C."/>
            <person name="Jalali M."/>
            <person name="Kalush F."/>
            <person name="Karpen G.H."/>
            <person name="Ke Z."/>
            <person name="Kennison J.A."/>
            <person name="Ketchum K.A."/>
            <person name="Kimmel B.E."/>
            <person name="Kodira C.D."/>
            <person name="Kraft C.L."/>
            <person name="Kravitz S."/>
            <person name="Kulp D."/>
            <person name="Lai Z."/>
            <person name="Lasko P."/>
            <person name="Lei Y."/>
            <person name="Levitsky A.A."/>
            <person name="Li J.H."/>
            <person name="Li Z."/>
            <person name="Liang Y."/>
            <person name="Lin X."/>
            <person name="Liu X."/>
            <person name="Mattei B."/>
            <person name="McIntosh T.C."/>
            <person name="McLeod M.P."/>
            <person name="McPherson D."/>
            <person name="Merkulov G."/>
            <person name="Milshina N.V."/>
            <person name="Mobarry C."/>
            <person name="Morris J."/>
            <person name="Moshrefi A."/>
            <person name="Mount S.M."/>
            <person name="Moy M."/>
            <person name="Murphy B."/>
            <person name="Murphy L."/>
            <person name="Muzny D.M."/>
            <person name="Nelson D.L."/>
            <person name="Nelson D.R."/>
            <person name="Nelson K.A."/>
            <person name="Nixon K."/>
            <person name="Nusskern D.R."/>
            <person name="Pacleb J.M."/>
            <person name="Palazzolo M."/>
            <person name="Pittman G.S."/>
            <person name="Pan S."/>
            <person name="Pollard J."/>
            <person name="Puri V."/>
            <person name="Reese M.G."/>
            <person name="Reinert K."/>
            <person name="Remington K."/>
            <person name="Saunders R.D.C."/>
            <person name="Scheeler F."/>
            <person name="Shen H."/>
            <person name="Shue B.C."/>
            <person name="Siden-Kiamos I."/>
            <person name="Simpson M."/>
            <person name="Skupski M.P."/>
            <person name="Smith T.J."/>
            <person name="Spier E."/>
            <person name="Spradling A.C."/>
            <person name="Stapleton M."/>
            <person name="Strong R."/>
            <person name="Sun E."/>
            <person name="Svirskas R."/>
            <person name="Tector C."/>
            <person name="Turner R."/>
            <person name="Venter E."/>
            <person name="Wang A.H."/>
            <person name="Wang X."/>
            <person name="Wang Z.-Y."/>
            <person name="Wassarman D.A."/>
            <person name="Weinstock G.M."/>
            <person name="Weissenbach J."/>
            <person name="Williams S.M."/>
            <person name="Woodage T."/>
            <person name="Worley K.C."/>
            <person name="Wu D."/>
            <person name="Yang S."/>
            <person name="Yao Q.A."/>
            <person name="Ye J."/>
            <person name="Yeh R.-F."/>
            <person name="Zaveri J.S."/>
            <person name="Zhan M."/>
            <person name="Zhang G."/>
            <person name="Zhao Q."/>
            <person name="Zheng L."/>
            <person name="Zheng X.H."/>
            <person name="Zhong F.N."/>
            <person name="Zhong W."/>
            <person name="Zhou X."/>
            <person name="Zhu S.C."/>
            <person name="Zhu X."/>
            <person name="Smith H.O."/>
            <person name="Gibbs R.A."/>
            <person name="Myers E.W."/>
            <person name="Rubin G.M."/>
            <person name="Venter J.C."/>
        </authorList>
    </citation>
    <scope>NUCLEOTIDE SEQUENCE [LARGE SCALE GENOMIC DNA]</scope>
    <source>
        <strain>Berkeley</strain>
    </source>
</reference>
<reference key="4">
    <citation type="journal article" date="2002" name="Genome Biol.">
        <title>Annotation of the Drosophila melanogaster euchromatic genome: a systematic review.</title>
        <authorList>
            <person name="Misra S."/>
            <person name="Crosby M.A."/>
            <person name="Mungall C.J."/>
            <person name="Matthews B.B."/>
            <person name="Campbell K.S."/>
            <person name="Hradecky P."/>
            <person name="Huang Y."/>
            <person name="Kaminker J.S."/>
            <person name="Millburn G.H."/>
            <person name="Prochnik S.E."/>
            <person name="Smith C.D."/>
            <person name="Tupy J.L."/>
            <person name="Whitfield E.J."/>
            <person name="Bayraktaroglu L."/>
            <person name="Berman B.P."/>
            <person name="Bettencourt B.R."/>
            <person name="Celniker S.E."/>
            <person name="de Grey A.D.N.J."/>
            <person name="Drysdale R.A."/>
            <person name="Harris N.L."/>
            <person name="Richter J."/>
            <person name="Russo S."/>
            <person name="Schroeder A.J."/>
            <person name="Shu S.Q."/>
            <person name="Stapleton M."/>
            <person name="Yamada C."/>
            <person name="Ashburner M."/>
            <person name="Gelbart W.M."/>
            <person name="Rubin G.M."/>
            <person name="Lewis S.E."/>
        </authorList>
    </citation>
    <scope>GENOME REANNOTATION</scope>
    <scope>ALTERNATIVE SPLICING</scope>
    <source>
        <strain>Berkeley</strain>
    </source>
</reference>
<reference key="5">
    <citation type="journal article" date="2002" name="Genome Biol.">
        <title>A Drosophila full-length cDNA resource.</title>
        <authorList>
            <person name="Stapleton M."/>
            <person name="Carlson J.W."/>
            <person name="Brokstein P."/>
            <person name="Yu C."/>
            <person name="Champe M."/>
            <person name="George R.A."/>
            <person name="Guarin H."/>
            <person name="Kronmiller B."/>
            <person name="Pacleb J.M."/>
            <person name="Park S."/>
            <person name="Wan K.H."/>
            <person name="Rubin G.M."/>
            <person name="Celniker S.E."/>
        </authorList>
    </citation>
    <scope>NUCLEOTIDE SEQUENCE [LARGE SCALE MRNA] (ISOFORMS LONG AND SHORT)</scope>
    <source>
        <strain>Berkeley</strain>
        <tissue>Ovary</tissue>
    </source>
</reference>
<sequence length="187" mass="21309">MSVVPLMFRDWWDELDFPMRTSRLLDQHFGQGLKRDDLMSSVWNSRPTVLRSGYLRPWHTNSLQKQESGSTLNIDSEKFEVILDVQQFSPSEITVKVADKFVIVEGKHEEKQDEHGYVSRQFSRRYQLPSDVNPDTVTSSLSSDGLLTIKAPMKALPPPQTERLVQITQTGPSSKEDNAKKVETSTA</sequence>
<organism>
    <name type="scientific">Drosophila melanogaster</name>
    <name type="common">Fruit fly</name>
    <dbReference type="NCBI Taxonomy" id="7227"/>
    <lineage>
        <taxon>Eukaryota</taxon>
        <taxon>Metazoa</taxon>
        <taxon>Ecdysozoa</taxon>
        <taxon>Arthropoda</taxon>
        <taxon>Hexapoda</taxon>
        <taxon>Insecta</taxon>
        <taxon>Pterygota</taxon>
        <taxon>Neoptera</taxon>
        <taxon>Endopterygota</taxon>
        <taxon>Diptera</taxon>
        <taxon>Brachycera</taxon>
        <taxon>Muscomorpha</taxon>
        <taxon>Ephydroidea</taxon>
        <taxon>Drosophilidae</taxon>
        <taxon>Drosophila</taxon>
        <taxon>Sophophora</taxon>
    </lineage>
</organism>
<gene>
    <name type="primary">l(2)efl</name>
    <name type="ORF">CG4533</name>
</gene>
<keyword id="KW-0025">Alternative splicing</keyword>
<keyword id="KW-0217">Developmental protein</keyword>
<keyword id="KW-1185">Reference proteome</keyword>
<keyword id="KW-0346">Stress response</keyword>